<reference key="1">
    <citation type="journal article" date="2008" name="BMC Genomics">
        <title>The genome sequence of the fish pathogen Aliivibrio salmonicida strain LFI1238 shows extensive evidence of gene decay.</title>
        <authorList>
            <person name="Hjerde E."/>
            <person name="Lorentzen M.S."/>
            <person name="Holden M.T."/>
            <person name="Seeger K."/>
            <person name="Paulsen S."/>
            <person name="Bason N."/>
            <person name="Churcher C."/>
            <person name="Harris D."/>
            <person name="Norbertczak H."/>
            <person name="Quail M.A."/>
            <person name="Sanders S."/>
            <person name="Thurston S."/>
            <person name="Parkhill J."/>
            <person name="Willassen N.P."/>
            <person name="Thomson N.R."/>
        </authorList>
    </citation>
    <scope>NUCLEOTIDE SEQUENCE [LARGE SCALE GENOMIC DNA]</scope>
    <source>
        <strain>LFI1238</strain>
    </source>
</reference>
<gene>
    <name evidence="1" type="primary">aroE</name>
    <name type="ordered locus">VSAL_I0083</name>
</gene>
<keyword id="KW-0028">Amino-acid biosynthesis</keyword>
<keyword id="KW-0057">Aromatic amino acid biosynthesis</keyword>
<keyword id="KW-0521">NADP</keyword>
<keyword id="KW-0560">Oxidoreductase</keyword>
<organism>
    <name type="scientific">Aliivibrio salmonicida (strain LFI1238)</name>
    <name type="common">Vibrio salmonicida (strain LFI1238)</name>
    <dbReference type="NCBI Taxonomy" id="316275"/>
    <lineage>
        <taxon>Bacteria</taxon>
        <taxon>Pseudomonadati</taxon>
        <taxon>Pseudomonadota</taxon>
        <taxon>Gammaproteobacteria</taxon>
        <taxon>Vibrionales</taxon>
        <taxon>Vibrionaceae</taxon>
        <taxon>Aliivibrio</taxon>
    </lineage>
</organism>
<feature type="chain" id="PRO_1000100101" description="Shikimate dehydrogenase (NADP(+))">
    <location>
        <begin position="1"/>
        <end position="273"/>
    </location>
</feature>
<feature type="active site" description="Proton acceptor" evidence="1">
    <location>
        <position position="65"/>
    </location>
</feature>
<feature type="binding site" evidence="1">
    <location>
        <begin position="14"/>
        <end position="16"/>
    </location>
    <ligand>
        <name>shikimate</name>
        <dbReference type="ChEBI" id="CHEBI:36208"/>
    </ligand>
</feature>
<feature type="binding site" evidence="1">
    <location>
        <position position="61"/>
    </location>
    <ligand>
        <name>shikimate</name>
        <dbReference type="ChEBI" id="CHEBI:36208"/>
    </ligand>
</feature>
<feature type="binding site" evidence="1">
    <location>
        <position position="77"/>
    </location>
    <ligand>
        <name>NADP(+)</name>
        <dbReference type="ChEBI" id="CHEBI:58349"/>
    </ligand>
</feature>
<feature type="binding site" evidence="1">
    <location>
        <position position="86"/>
    </location>
    <ligand>
        <name>shikimate</name>
        <dbReference type="ChEBI" id="CHEBI:36208"/>
    </ligand>
</feature>
<feature type="binding site" evidence="1">
    <location>
        <position position="102"/>
    </location>
    <ligand>
        <name>shikimate</name>
        <dbReference type="ChEBI" id="CHEBI:36208"/>
    </ligand>
</feature>
<feature type="binding site" evidence="1">
    <location>
        <begin position="126"/>
        <end position="130"/>
    </location>
    <ligand>
        <name>NADP(+)</name>
        <dbReference type="ChEBI" id="CHEBI:58349"/>
    </ligand>
</feature>
<feature type="binding site" evidence="1">
    <location>
        <begin position="150"/>
        <end position="155"/>
    </location>
    <ligand>
        <name>NADP(+)</name>
        <dbReference type="ChEBI" id="CHEBI:58349"/>
    </ligand>
</feature>
<feature type="binding site" evidence="1">
    <location>
        <position position="213"/>
    </location>
    <ligand>
        <name>NADP(+)</name>
        <dbReference type="ChEBI" id="CHEBI:58349"/>
    </ligand>
</feature>
<feature type="binding site" evidence="1">
    <location>
        <position position="215"/>
    </location>
    <ligand>
        <name>shikimate</name>
        <dbReference type="ChEBI" id="CHEBI:36208"/>
    </ligand>
</feature>
<feature type="binding site" evidence="1">
    <location>
        <position position="237"/>
    </location>
    <ligand>
        <name>NADP(+)</name>
        <dbReference type="ChEBI" id="CHEBI:58349"/>
    </ligand>
</feature>
<evidence type="ECO:0000255" key="1">
    <source>
        <dbReference type="HAMAP-Rule" id="MF_00222"/>
    </source>
</evidence>
<accession>B6EP29</accession>
<sequence length="273" mass="29876">MDKYAVFGHPIKQSKSPFIHTLFARQTIQPLEYVAIEAPVDGFLNSVTHFFSNGGKGCNITVPFKEEAFQFADQLTDRAKLAGAVNTLKKLDDGIILGDNTDGEGLVQDLLQYQVPLQDKRILLIGAGGAARGVLLPLLKQNPSSITVVNRTYEKAEALAEIFSAYGAVEAVRMSDVTRSFDVIINSTSASLSGELPNISPVIFSKGSISYDMMYGKGKTVFNQWALDNDVYQAYDGLGMLVGQAAESFTVWRGLRPSSKQILRELRKNLEGM</sequence>
<dbReference type="EC" id="1.1.1.25" evidence="1"/>
<dbReference type="EMBL" id="FM178379">
    <property type="protein sequence ID" value="CAQ77768.1"/>
    <property type="molecule type" value="Genomic_DNA"/>
</dbReference>
<dbReference type="RefSeq" id="WP_012548979.1">
    <property type="nucleotide sequence ID" value="NC_011312.1"/>
</dbReference>
<dbReference type="SMR" id="B6EP29"/>
<dbReference type="KEGG" id="vsa:VSAL_I0083"/>
<dbReference type="eggNOG" id="COG0169">
    <property type="taxonomic scope" value="Bacteria"/>
</dbReference>
<dbReference type="HOGENOM" id="CLU_044063_2_1_6"/>
<dbReference type="UniPathway" id="UPA00053">
    <property type="reaction ID" value="UER00087"/>
</dbReference>
<dbReference type="Proteomes" id="UP000001730">
    <property type="component" value="Chromosome 1"/>
</dbReference>
<dbReference type="GO" id="GO:0005829">
    <property type="term" value="C:cytosol"/>
    <property type="evidence" value="ECO:0007669"/>
    <property type="project" value="TreeGrafter"/>
</dbReference>
<dbReference type="GO" id="GO:0050661">
    <property type="term" value="F:NADP binding"/>
    <property type="evidence" value="ECO:0007669"/>
    <property type="project" value="InterPro"/>
</dbReference>
<dbReference type="GO" id="GO:0004764">
    <property type="term" value="F:shikimate 3-dehydrogenase (NADP+) activity"/>
    <property type="evidence" value="ECO:0007669"/>
    <property type="project" value="UniProtKB-UniRule"/>
</dbReference>
<dbReference type="GO" id="GO:0008652">
    <property type="term" value="P:amino acid biosynthetic process"/>
    <property type="evidence" value="ECO:0007669"/>
    <property type="project" value="UniProtKB-KW"/>
</dbReference>
<dbReference type="GO" id="GO:0009073">
    <property type="term" value="P:aromatic amino acid family biosynthetic process"/>
    <property type="evidence" value="ECO:0007669"/>
    <property type="project" value="UniProtKB-KW"/>
</dbReference>
<dbReference type="GO" id="GO:0009423">
    <property type="term" value="P:chorismate biosynthetic process"/>
    <property type="evidence" value="ECO:0007669"/>
    <property type="project" value="UniProtKB-UniRule"/>
</dbReference>
<dbReference type="GO" id="GO:0019632">
    <property type="term" value="P:shikimate metabolic process"/>
    <property type="evidence" value="ECO:0007669"/>
    <property type="project" value="InterPro"/>
</dbReference>
<dbReference type="CDD" id="cd01065">
    <property type="entry name" value="NAD_bind_Shikimate_DH"/>
    <property type="match status" value="1"/>
</dbReference>
<dbReference type="FunFam" id="3.40.50.10860:FF:000006">
    <property type="entry name" value="Shikimate dehydrogenase (NADP(+))"/>
    <property type="match status" value="1"/>
</dbReference>
<dbReference type="FunFam" id="3.40.50.720:FF:000104">
    <property type="entry name" value="Shikimate dehydrogenase (NADP(+))"/>
    <property type="match status" value="1"/>
</dbReference>
<dbReference type="Gene3D" id="3.40.50.10860">
    <property type="entry name" value="Leucine Dehydrogenase, chain A, domain 1"/>
    <property type="match status" value="1"/>
</dbReference>
<dbReference type="Gene3D" id="3.40.50.720">
    <property type="entry name" value="NAD(P)-binding Rossmann-like Domain"/>
    <property type="match status" value="1"/>
</dbReference>
<dbReference type="HAMAP" id="MF_00222">
    <property type="entry name" value="Shikimate_DH_AroE"/>
    <property type="match status" value="1"/>
</dbReference>
<dbReference type="InterPro" id="IPR046346">
    <property type="entry name" value="Aminoacid_DH-like_N_sf"/>
</dbReference>
<dbReference type="InterPro" id="IPR036291">
    <property type="entry name" value="NAD(P)-bd_dom_sf"/>
</dbReference>
<dbReference type="InterPro" id="IPR041121">
    <property type="entry name" value="SDH_C"/>
</dbReference>
<dbReference type="InterPro" id="IPR011342">
    <property type="entry name" value="Shikimate_DH"/>
</dbReference>
<dbReference type="InterPro" id="IPR013708">
    <property type="entry name" value="Shikimate_DH-bd_N"/>
</dbReference>
<dbReference type="InterPro" id="IPR022893">
    <property type="entry name" value="Shikimate_DH_fam"/>
</dbReference>
<dbReference type="InterPro" id="IPR006151">
    <property type="entry name" value="Shikm_DH/Glu-tRNA_Rdtase"/>
</dbReference>
<dbReference type="NCBIfam" id="TIGR00507">
    <property type="entry name" value="aroE"/>
    <property type="match status" value="1"/>
</dbReference>
<dbReference type="NCBIfam" id="NF001310">
    <property type="entry name" value="PRK00258.1-2"/>
    <property type="match status" value="1"/>
</dbReference>
<dbReference type="PANTHER" id="PTHR21089:SF1">
    <property type="entry name" value="BIFUNCTIONAL 3-DEHYDROQUINATE DEHYDRATASE_SHIKIMATE DEHYDROGENASE, CHLOROPLASTIC"/>
    <property type="match status" value="1"/>
</dbReference>
<dbReference type="PANTHER" id="PTHR21089">
    <property type="entry name" value="SHIKIMATE DEHYDROGENASE"/>
    <property type="match status" value="1"/>
</dbReference>
<dbReference type="Pfam" id="PF18317">
    <property type="entry name" value="SDH_C"/>
    <property type="match status" value="1"/>
</dbReference>
<dbReference type="Pfam" id="PF01488">
    <property type="entry name" value="Shikimate_DH"/>
    <property type="match status" value="1"/>
</dbReference>
<dbReference type="Pfam" id="PF08501">
    <property type="entry name" value="Shikimate_dh_N"/>
    <property type="match status" value="1"/>
</dbReference>
<dbReference type="SUPFAM" id="SSF53223">
    <property type="entry name" value="Aminoacid dehydrogenase-like, N-terminal domain"/>
    <property type="match status" value="1"/>
</dbReference>
<dbReference type="SUPFAM" id="SSF51735">
    <property type="entry name" value="NAD(P)-binding Rossmann-fold domains"/>
    <property type="match status" value="1"/>
</dbReference>
<proteinExistence type="inferred from homology"/>
<protein>
    <recommendedName>
        <fullName evidence="1">Shikimate dehydrogenase (NADP(+))</fullName>
        <shortName evidence="1">SDH</shortName>
        <ecNumber evidence="1">1.1.1.25</ecNumber>
    </recommendedName>
</protein>
<comment type="function">
    <text evidence="1">Involved in the biosynthesis of the chorismate, which leads to the biosynthesis of aromatic amino acids. Catalyzes the reversible NADPH linked reduction of 3-dehydroshikimate (DHSA) to yield shikimate (SA).</text>
</comment>
<comment type="catalytic activity">
    <reaction evidence="1">
        <text>shikimate + NADP(+) = 3-dehydroshikimate + NADPH + H(+)</text>
        <dbReference type="Rhea" id="RHEA:17737"/>
        <dbReference type="ChEBI" id="CHEBI:15378"/>
        <dbReference type="ChEBI" id="CHEBI:16630"/>
        <dbReference type="ChEBI" id="CHEBI:36208"/>
        <dbReference type="ChEBI" id="CHEBI:57783"/>
        <dbReference type="ChEBI" id="CHEBI:58349"/>
        <dbReference type="EC" id="1.1.1.25"/>
    </reaction>
</comment>
<comment type="pathway">
    <text evidence="1">Metabolic intermediate biosynthesis; chorismate biosynthesis; chorismate from D-erythrose 4-phosphate and phosphoenolpyruvate: step 4/7.</text>
</comment>
<comment type="subunit">
    <text evidence="1">Homodimer.</text>
</comment>
<comment type="similarity">
    <text evidence="1">Belongs to the shikimate dehydrogenase family.</text>
</comment>
<name>AROE_ALISL</name>